<comment type="function">
    <text evidence="1">Catalyzes the oxidation of 3-carboxy-2-hydroxy-4-methylpentanoate (3-isopropylmalate) to 3-carboxy-4-methyl-2-oxopentanoate. The product decarboxylates to 4-methyl-2 oxopentanoate.</text>
</comment>
<comment type="catalytic activity">
    <reaction evidence="1">
        <text>(2R,3S)-3-isopropylmalate + NAD(+) = 4-methyl-2-oxopentanoate + CO2 + NADH</text>
        <dbReference type="Rhea" id="RHEA:32271"/>
        <dbReference type="ChEBI" id="CHEBI:16526"/>
        <dbReference type="ChEBI" id="CHEBI:17865"/>
        <dbReference type="ChEBI" id="CHEBI:35121"/>
        <dbReference type="ChEBI" id="CHEBI:57540"/>
        <dbReference type="ChEBI" id="CHEBI:57945"/>
        <dbReference type="EC" id="1.1.1.85"/>
    </reaction>
</comment>
<comment type="cofactor">
    <cofactor evidence="1">
        <name>Mg(2+)</name>
        <dbReference type="ChEBI" id="CHEBI:18420"/>
    </cofactor>
    <cofactor evidence="1">
        <name>Mn(2+)</name>
        <dbReference type="ChEBI" id="CHEBI:29035"/>
    </cofactor>
    <text evidence="1">Binds 1 Mg(2+) or Mn(2+) ion per subunit.</text>
</comment>
<comment type="pathway">
    <text evidence="1">Amino-acid biosynthesis; L-leucine biosynthesis; L-leucine from 3-methyl-2-oxobutanoate: step 3/4.</text>
</comment>
<comment type="subunit">
    <text evidence="1">Homodimer.</text>
</comment>
<comment type="subcellular location">
    <subcellularLocation>
        <location evidence="1">Cytoplasm</location>
    </subcellularLocation>
</comment>
<comment type="similarity">
    <text evidence="1">Belongs to the isocitrate and isopropylmalate dehydrogenases family. LeuB type 1 subfamily.</text>
</comment>
<keyword id="KW-0028">Amino-acid biosynthesis</keyword>
<keyword id="KW-0100">Branched-chain amino acid biosynthesis</keyword>
<keyword id="KW-0963">Cytoplasm</keyword>
<keyword id="KW-0432">Leucine biosynthesis</keyword>
<keyword id="KW-0460">Magnesium</keyword>
<keyword id="KW-0464">Manganese</keyword>
<keyword id="KW-0479">Metal-binding</keyword>
<keyword id="KW-0520">NAD</keyword>
<keyword id="KW-0560">Oxidoreductase</keyword>
<keyword id="KW-1185">Reference proteome</keyword>
<name>LEU3_OLEA2</name>
<feature type="chain" id="PRO_0000250115" description="3-isopropylmalate dehydrogenase">
    <location>
        <begin position="1"/>
        <end position="358"/>
    </location>
</feature>
<feature type="binding site" evidence="1">
    <location>
        <begin position="76"/>
        <end position="89"/>
    </location>
    <ligand>
        <name>NAD(+)</name>
        <dbReference type="ChEBI" id="CHEBI:57540"/>
    </ligand>
</feature>
<feature type="binding site" evidence="1">
    <location>
        <position position="96"/>
    </location>
    <ligand>
        <name>substrate</name>
    </ligand>
</feature>
<feature type="binding site" evidence="1">
    <location>
        <position position="106"/>
    </location>
    <ligand>
        <name>substrate</name>
    </ligand>
</feature>
<feature type="binding site" evidence="1">
    <location>
        <position position="135"/>
    </location>
    <ligand>
        <name>substrate</name>
    </ligand>
</feature>
<feature type="binding site" evidence="1">
    <location>
        <position position="225"/>
    </location>
    <ligand>
        <name>Mg(2+)</name>
        <dbReference type="ChEBI" id="CHEBI:18420"/>
    </ligand>
</feature>
<feature type="binding site" evidence="1">
    <location>
        <position position="225"/>
    </location>
    <ligand>
        <name>substrate</name>
    </ligand>
</feature>
<feature type="binding site" evidence="1">
    <location>
        <position position="249"/>
    </location>
    <ligand>
        <name>Mg(2+)</name>
        <dbReference type="ChEBI" id="CHEBI:18420"/>
    </ligand>
</feature>
<feature type="binding site" evidence="1">
    <location>
        <position position="253"/>
    </location>
    <ligand>
        <name>Mg(2+)</name>
        <dbReference type="ChEBI" id="CHEBI:18420"/>
    </ligand>
</feature>
<feature type="binding site" evidence="1">
    <location>
        <begin position="283"/>
        <end position="295"/>
    </location>
    <ligand>
        <name>NAD(+)</name>
        <dbReference type="ChEBI" id="CHEBI:57540"/>
    </ligand>
</feature>
<feature type="site" description="Important for catalysis" evidence="1">
    <location>
        <position position="142"/>
    </location>
</feature>
<feature type="site" description="Important for catalysis" evidence="1">
    <location>
        <position position="192"/>
    </location>
</feature>
<protein>
    <recommendedName>
        <fullName evidence="1">3-isopropylmalate dehydrogenase</fullName>
        <ecNumber evidence="1">1.1.1.85</ecNumber>
    </recommendedName>
    <alternativeName>
        <fullName evidence="1">3-IPM-DH</fullName>
    </alternativeName>
    <alternativeName>
        <fullName evidence="1">Beta-IPM dehydrogenase</fullName>
        <shortName evidence="1">IMDH</shortName>
    </alternativeName>
</protein>
<dbReference type="EC" id="1.1.1.85" evidence="1"/>
<dbReference type="EMBL" id="CP000112">
    <property type="protein sequence ID" value="ABB40016.1"/>
    <property type="molecule type" value="Genomic_DNA"/>
</dbReference>
<dbReference type="RefSeq" id="WP_011368967.1">
    <property type="nucleotide sequence ID" value="NC_007519.1"/>
</dbReference>
<dbReference type="SMR" id="Q30WD0"/>
<dbReference type="STRING" id="207559.Dde_3222"/>
<dbReference type="KEGG" id="dde:Dde_3222"/>
<dbReference type="eggNOG" id="COG0473">
    <property type="taxonomic scope" value="Bacteria"/>
</dbReference>
<dbReference type="HOGENOM" id="CLU_031953_0_3_7"/>
<dbReference type="UniPathway" id="UPA00048">
    <property type="reaction ID" value="UER00072"/>
</dbReference>
<dbReference type="Proteomes" id="UP000002710">
    <property type="component" value="Chromosome"/>
</dbReference>
<dbReference type="GO" id="GO:0005829">
    <property type="term" value="C:cytosol"/>
    <property type="evidence" value="ECO:0007669"/>
    <property type="project" value="TreeGrafter"/>
</dbReference>
<dbReference type="GO" id="GO:0003862">
    <property type="term" value="F:3-isopropylmalate dehydrogenase activity"/>
    <property type="evidence" value="ECO:0007669"/>
    <property type="project" value="UniProtKB-UniRule"/>
</dbReference>
<dbReference type="GO" id="GO:0000287">
    <property type="term" value="F:magnesium ion binding"/>
    <property type="evidence" value="ECO:0007669"/>
    <property type="project" value="InterPro"/>
</dbReference>
<dbReference type="GO" id="GO:0051287">
    <property type="term" value="F:NAD binding"/>
    <property type="evidence" value="ECO:0007669"/>
    <property type="project" value="InterPro"/>
</dbReference>
<dbReference type="GO" id="GO:0009098">
    <property type="term" value="P:L-leucine biosynthetic process"/>
    <property type="evidence" value="ECO:0007669"/>
    <property type="project" value="UniProtKB-UniRule"/>
</dbReference>
<dbReference type="FunFam" id="3.40.718.10:FF:000028">
    <property type="entry name" value="3-isopropylmalate dehydrogenase"/>
    <property type="match status" value="1"/>
</dbReference>
<dbReference type="Gene3D" id="3.40.718.10">
    <property type="entry name" value="Isopropylmalate Dehydrogenase"/>
    <property type="match status" value="1"/>
</dbReference>
<dbReference type="HAMAP" id="MF_01033">
    <property type="entry name" value="LeuB_type1"/>
    <property type="match status" value="1"/>
</dbReference>
<dbReference type="InterPro" id="IPR019818">
    <property type="entry name" value="IsoCit/isopropylmalate_DH_CS"/>
</dbReference>
<dbReference type="InterPro" id="IPR024084">
    <property type="entry name" value="IsoPropMal-DH-like_dom"/>
</dbReference>
<dbReference type="InterPro" id="IPR004429">
    <property type="entry name" value="Isopropylmalate_DH"/>
</dbReference>
<dbReference type="NCBIfam" id="TIGR00169">
    <property type="entry name" value="leuB"/>
    <property type="match status" value="1"/>
</dbReference>
<dbReference type="PANTHER" id="PTHR42979">
    <property type="entry name" value="3-ISOPROPYLMALATE DEHYDROGENASE"/>
    <property type="match status" value="1"/>
</dbReference>
<dbReference type="PANTHER" id="PTHR42979:SF1">
    <property type="entry name" value="3-ISOPROPYLMALATE DEHYDROGENASE"/>
    <property type="match status" value="1"/>
</dbReference>
<dbReference type="Pfam" id="PF00180">
    <property type="entry name" value="Iso_dh"/>
    <property type="match status" value="1"/>
</dbReference>
<dbReference type="SMART" id="SM01329">
    <property type="entry name" value="Iso_dh"/>
    <property type="match status" value="1"/>
</dbReference>
<dbReference type="SUPFAM" id="SSF53659">
    <property type="entry name" value="Isocitrate/Isopropylmalate dehydrogenase-like"/>
    <property type="match status" value="1"/>
</dbReference>
<dbReference type="PROSITE" id="PS00470">
    <property type="entry name" value="IDH_IMDH"/>
    <property type="match status" value="1"/>
</dbReference>
<reference key="1">
    <citation type="journal article" date="2011" name="J. Bacteriol.">
        <title>Complete genome sequence and updated annotation of Desulfovibrio alaskensis G20.</title>
        <authorList>
            <person name="Hauser L.J."/>
            <person name="Land M.L."/>
            <person name="Brown S.D."/>
            <person name="Larimer F."/>
            <person name="Keller K.L."/>
            <person name="Rapp-Giles B.J."/>
            <person name="Price M.N."/>
            <person name="Lin M."/>
            <person name="Bruce D.C."/>
            <person name="Detter J.C."/>
            <person name="Tapia R."/>
            <person name="Han C.S."/>
            <person name="Goodwin L.A."/>
            <person name="Cheng J.F."/>
            <person name="Pitluck S."/>
            <person name="Copeland A."/>
            <person name="Lucas S."/>
            <person name="Nolan M."/>
            <person name="Lapidus A.L."/>
            <person name="Palumbo A.V."/>
            <person name="Wall J.D."/>
        </authorList>
    </citation>
    <scope>NUCLEOTIDE SEQUENCE [LARGE SCALE GENOMIC DNA]</scope>
    <source>
        <strain>ATCC BAA-1058 / DSM 17464 / G20</strain>
    </source>
</reference>
<organism>
    <name type="scientific">Oleidesulfovibrio alaskensis (strain ATCC BAA-1058 / DSM 17464 / G20)</name>
    <name type="common">Desulfovibrio alaskensis</name>
    <dbReference type="NCBI Taxonomy" id="207559"/>
    <lineage>
        <taxon>Bacteria</taxon>
        <taxon>Pseudomonadati</taxon>
        <taxon>Thermodesulfobacteriota</taxon>
        <taxon>Desulfovibrionia</taxon>
        <taxon>Desulfovibrionales</taxon>
        <taxon>Desulfovibrionaceae</taxon>
        <taxon>Oleidesulfovibrio</taxon>
    </lineage>
</organism>
<accession>Q30WD0</accession>
<evidence type="ECO:0000255" key="1">
    <source>
        <dbReference type="HAMAP-Rule" id="MF_01033"/>
    </source>
</evidence>
<sequence length="358" mass="38010">MEMRICLLAGDGIGPEIMEQGVRVLETVAGKFGHDMEFTDALIGGAAIDETGDPLPQETVEACKAAQAVLLGAVGGPRWDNLTGAERPEAGLLGIRKALGLFANLRPAKLFPELASACFLRPDIVANGIDVMVVRELTGGIYFGTPAGEETRDGLRTAFNTMVYNEEEVRRIARVAFEAARKRSGRVCSVDKANVLAVSRLWREIVTATHADEFPDVELSHMYVDNAAMQLVRDPSQFDVIVTGNLFGDILSDEASVITGSIGMLPSASLGAGGPGLFEPIHGSAPDIAGQNKANPLATILSTAMMLRHSFGLEKEAEAVEGAVQQVLKAGYRTGDIMDQGGTLVGCNTMGNLVNERI</sequence>
<gene>
    <name evidence="1" type="primary">leuB</name>
    <name type="ordered locus">Dde_3222</name>
</gene>
<proteinExistence type="inferred from homology"/>